<gene>
    <name evidence="1" type="primary">dnaA</name>
    <name type="ordered locus">XF_0001</name>
</gene>
<dbReference type="EMBL" id="AE003849">
    <property type="protein sequence ID" value="AAF82814.1"/>
    <property type="molecule type" value="Genomic_DNA"/>
</dbReference>
<dbReference type="PIR" id="G82859">
    <property type="entry name" value="G82859"/>
</dbReference>
<dbReference type="RefSeq" id="WP_010892550.1">
    <property type="nucleotide sequence ID" value="NC_002488.3"/>
</dbReference>
<dbReference type="SMR" id="Q9PHE3"/>
<dbReference type="STRING" id="160492.XF_0001"/>
<dbReference type="KEGG" id="xfa:XF_0001"/>
<dbReference type="eggNOG" id="COG0593">
    <property type="taxonomic scope" value="Bacteria"/>
</dbReference>
<dbReference type="HOGENOM" id="CLU_026910_0_1_6"/>
<dbReference type="Proteomes" id="UP000000812">
    <property type="component" value="Chromosome"/>
</dbReference>
<dbReference type="GO" id="GO:0005737">
    <property type="term" value="C:cytoplasm"/>
    <property type="evidence" value="ECO:0007669"/>
    <property type="project" value="UniProtKB-SubCell"/>
</dbReference>
<dbReference type="GO" id="GO:0005886">
    <property type="term" value="C:plasma membrane"/>
    <property type="evidence" value="ECO:0007669"/>
    <property type="project" value="TreeGrafter"/>
</dbReference>
<dbReference type="GO" id="GO:0005524">
    <property type="term" value="F:ATP binding"/>
    <property type="evidence" value="ECO:0007669"/>
    <property type="project" value="UniProtKB-UniRule"/>
</dbReference>
<dbReference type="GO" id="GO:0016887">
    <property type="term" value="F:ATP hydrolysis activity"/>
    <property type="evidence" value="ECO:0007669"/>
    <property type="project" value="InterPro"/>
</dbReference>
<dbReference type="GO" id="GO:0003688">
    <property type="term" value="F:DNA replication origin binding"/>
    <property type="evidence" value="ECO:0007669"/>
    <property type="project" value="UniProtKB-UniRule"/>
</dbReference>
<dbReference type="GO" id="GO:0008289">
    <property type="term" value="F:lipid binding"/>
    <property type="evidence" value="ECO:0007669"/>
    <property type="project" value="UniProtKB-KW"/>
</dbReference>
<dbReference type="GO" id="GO:0006270">
    <property type="term" value="P:DNA replication initiation"/>
    <property type="evidence" value="ECO:0007669"/>
    <property type="project" value="UniProtKB-UniRule"/>
</dbReference>
<dbReference type="GO" id="GO:0006275">
    <property type="term" value="P:regulation of DNA replication"/>
    <property type="evidence" value="ECO:0007669"/>
    <property type="project" value="UniProtKB-UniRule"/>
</dbReference>
<dbReference type="CDD" id="cd06571">
    <property type="entry name" value="Bac_DnaA_C"/>
    <property type="match status" value="1"/>
</dbReference>
<dbReference type="FunFam" id="1.10.8.60:FF:000003">
    <property type="entry name" value="Chromosomal replication initiator protein DnaA"/>
    <property type="match status" value="1"/>
</dbReference>
<dbReference type="FunFam" id="3.40.50.300:FF:000103">
    <property type="entry name" value="Chromosomal replication initiator protein DnaA"/>
    <property type="match status" value="1"/>
</dbReference>
<dbReference type="Gene3D" id="1.10.1750.10">
    <property type="match status" value="1"/>
</dbReference>
<dbReference type="Gene3D" id="1.10.8.60">
    <property type="match status" value="1"/>
</dbReference>
<dbReference type="Gene3D" id="3.30.300.180">
    <property type="match status" value="1"/>
</dbReference>
<dbReference type="Gene3D" id="3.40.50.300">
    <property type="entry name" value="P-loop containing nucleotide triphosphate hydrolases"/>
    <property type="match status" value="1"/>
</dbReference>
<dbReference type="HAMAP" id="MF_00377">
    <property type="entry name" value="DnaA_bact"/>
    <property type="match status" value="1"/>
</dbReference>
<dbReference type="InterPro" id="IPR003593">
    <property type="entry name" value="AAA+_ATPase"/>
</dbReference>
<dbReference type="InterPro" id="IPR001957">
    <property type="entry name" value="Chromosome_initiator_DnaA"/>
</dbReference>
<dbReference type="InterPro" id="IPR020591">
    <property type="entry name" value="Chromosome_initiator_DnaA-like"/>
</dbReference>
<dbReference type="InterPro" id="IPR018312">
    <property type="entry name" value="Chromosome_initiator_DnaA_CS"/>
</dbReference>
<dbReference type="InterPro" id="IPR013159">
    <property type="entry name" value="DnaA_C"/>
</dbReference>
<dbReference type="InterPro" id="IPR013317">
    <property type="entry name" value="DnaA_dom"/>
</dbReference>
<dbReference type="InterPro" id="IPR024633">
    <property type="entry name" value="DnaA_N_dom"/>
</dbReference>
<dbReference type="InterPro" id="IPR038454">
    <property type="entry name" value="DnaA_N_sf"/>
</dbReference>
<dbReference type="InterPro" id="IPR027417">
    <property type="entry name" value="P-loop_NTPase"/>
</dbReference>
<dbReference type="InterPro" id="IPR010921">
    <property type="entry name" value="Trp_repressor/repl_initiator"/>
</dbReference>
<dbReference type="NCBIfam" id="TIGR00362">
    <property type="entry name" value="DnaA"/>
    <property type="match status" value="1"/>
</dbReference>
<dbReference type="PANTHER" id="PTHR30050">
    <property type="entry name" value="CHROMOSOMAL REPLICATION INITIATOR PROTEIN DNAA"/>
    <property type="match status" value="1"/>
</dbReference>
<dbReference type="PANTHER" id="PTHR30050:SF2">
    <property type="entry name" value="CHROMOSOMAL REPLICATION INITIATOR PROTEIN DNAA"/>
    <property type="match status" value="1"/>
</dbReference>
<dbReference type="Pfam" id="PF00308">
    <property type="entry name" value="Bac_DnaA"/>
    <property type="match status" value="1"/>
</dbReference>
<dbReference type="Pfam" id="PF08299">
    <property type="entry name" value="Bac_DnaA_C"/>
    <property type="match status" value="1"/>
</dbReference>
<dbReference type="Pfam" id="PF11638">
    <property type="entry name" value="DnaA_N"/>
    <property type="match status" value="1"/>
</dbReference>
<dbReference type="PRINTS" id="PR00051">
    <property type="entry name" value="DNAA"/>
</dbReference>
<dbReference type="SMART" id="SM00382">
    <property type="entry name" value="AAA"/>
    <property type="match status" value="1"/>
</dbReference>
<dbReference type="SMART" id="SM00760">
    <property type="entry name" value="Bac_DnaA_C"/>
    <property type="match status" value="1"/>
</dbReference>
<dbReference type="SUPFAM" id="SSF52540">
    <property type="entry name" value="P-loop containing nucleoside triphosphate hydrolases"/>
    <property type="match status" value="1"/>
</dbReference>
<dbReference type="SUPFAM" id="SSF48295">
    <property type="entry name" value="TrpR-like"/>
    <property type="match status" value="1"/>
</dbReference>
<dbReference type="PROSITE" id="PS01008">
    <property type="entry name" value="DNAA"/>
    <property type="match status" value="1"/>
</dbReference>
<keyword id="KW-0067">ATP-binding</keyword>
<keyword id="KW-0963">Cytoplasm</keyword>
<keyword id="KW-0235">DNA replication</keyword>
<keyword id="KW-0238">DNA-binding</keyword>
<keyword id="KW-0446">Lipid-binding</keyword>
<keyword id="KW-0547">Nucleotide-binding</keyword>
<sequence length="439" mass="50164">MESWSRCLERLETEFPPEDVHTWLRPLQADQRGDSVVLYAPNPFIIELVEERYLGRLRELLSYFSGIREVVLAIGSRPKTTELPVPVDTTGRLSSTVPFNGNLDTHYNFDNFVEGRSNQLARAAAWQAAQKPGDRTHNPLLLYGGTGLGKTHLMFAAGNVMRQVNPTYKVMYLRSEQFFSAMIRALQDKSMDQFKRQFHQIDALLIDDIQFFAGKDRTQEEFFHTFNALFDGKQQIILTCDRYPREVNGLEPRLKSRLAWGLSVAIDPPDFETRAAIVLAKARERGATIPDEVAFLIAKKMHSNVRDLEGALNTLVARANFTGRAVTIEFSQETLRDLLRAQQQTIGIPNIQKIVADYYGLQIKDLLSKRRTRSLARPRQLAMALAKELTEHSLPEIGDAFAGRDHTTVLHACRQIKLLMETETKLREDWDKLMRKFSE</sequence>
<accession>Q9PHE3</accession>
<evidence type="ECO:0000255" key="1">
    <source>
        <dbReference type="HAMAP-Rule" id="MF_00377"/>
    </source>
</evidence>
<proteinExistence type="inferred from homology"/>
<comment type="function">
    <text evidence="1">Plays an essential role in the initiation and regulation of chromosomal replication. ATP-DnaA binds to the origin of replication (oriC) to initiate formation of the DNA replication initiation complex once per cell cycle. Binds the DnaA box (a 9 base pair repeat at the origin) and separates the double-stranded (ds)DNA. Forms a right-handed helical filament on oriC DNA; dsDNA binds to the exterior of the filament while single-stranded (ss)DNA is stabiized in the filament's interior. The ATP-DnaA-oriC complex binds and stabilizes one strand of the AT-rich DNA unwinding element (DUE), permitting loading of DNA polymerase. After initiation quickly degrades to an ADP-DnaA complex that is not apt for DNA replication. Binds acidic phospholipids.</text>
</comment>
<comment type="subunit">
    <text evidence="1">Oligomerizes as a right-handed, spiral filament on DNA at oriC.</text>
</comment>
<comment type="subcellular location">
    <subcellularLocation>
        <location evidence="1">Cytoplasm</location>
    </subcellularLocation>
</comment>
<comment type="domain">
    <text evidence="1">Domain I is involved in oligomerization and binding regulators, domain II is flexibile and of varying length in different bacteria, domain III forms the AAA+ region, while domain IV binds dsDNA.</text>
</comment>
<comment type="similarity">
    <text evidence="1">Belongs to the DnaA family.</text>
</comment>
<feature type="chain" id="PRO_0000114308" description="Chromosomal replication initiator protein DnaA">
    <location>
        <begin position="1"/>
        <end position="439"/>
    </location>
</feature>
<feature type="region of interest" description="Domain I, interacts with DnaA modulators" evidence="1">
    <location>
        <begin position="1"/>
        <end position="75"/>
    </location>
</feature>
<feature type="region of interest" description="Domain II" evidence="1">
    <location>
        <begin position="75"/>
        <end position="101"/>
    </location>
</feature>
<feature type="region of interest" description="Domain III, AAA+ region" evidence="1">
    <location>
        <begin position="102"/>
        <end position="319"/>
    </location>
</feature>
<feature type="region of interest" description="Domain IV, binds dsDNA" evidence="1">
    <location>
        <begin position="320"/>
        <end position="439"/>
    </location>
</feature>
<feature type="binding site" evidence="1">
    <location>
        <position position="147"/>
    </location>
    <ligand>
        <name>ATP</name>
        <dbReference type="ChEBI" id="CHEBI:30616"/>
    </ligand>
</feature>
<feature type="binding site" evidence="1">
    <location>
        <position position="149"/>
    </location>
    <ligand>
        <name>ATP</name>
        <dbReference type="ChEBI" id="CHEBI:30616"/>
    </ligand>
</feature>
<feature type="binding site" evidence="1">
    <location>
        <position position="150"/>
    </location>
    <ligand>
        <name>ATP</name>
        <dbReference type="ChEBI" id="CHEBI:30616"/>
    </ligand>
</feature>
<feature type="binding site" evidence="1">
    <location>
        <position position="151"/>
    </location>
    <ligand>
        <name>ATP</name>
        <dbReference type="ChEBI" id="CHEBI:30616"/>
    </ligand>
</feature>
<reference key="1">
    <citation type="journal article" date="2000" name="Nature">
        <title>The genome sequence of the plant pathogen Xylella fastidiosa.</title>
        <authorList>
            <person name="Simpson A.J.G."/>
            <person name="Reinach F.C."/>
            <person name="Arruda P."/>
            <person name="Abreu F.A."/>
            <person name="Acencio M."/>
            <person name="Alvarenga R."/>
            <person name="Alves L.M.C."/>
            <person name="Araya J.E."/>
            <person name="Baia G.S."/>
            <person name="Baptista C.S."/>
            <person name="Barros M.H."/>
            <person name="Bonaccorsi E.D."/>
            <person name="Bordin S."/>
            <person name="Bove J.M."/>
            <person name="Briones M.R.S."/>
            <person name="Bueno M.R.P."/>
            <person name="Camargo A.A."/>
            <person name="Camargo L.E.A."/>
            <person name="Carraro D.M."/>
            <person name="Carrer H."/>
            <person name="Colauto N.B."/>
            <person name="Colombo C."/>
            <person name="Costa F.F."/>
            <person name="Costa M.C.R."/>
            <person name="Costa-Neto C.M."/>
            <person name="Coutinho L.L."/>
            <person name="Cristofani M."/>
            <person name="Dias-Neto E."/>
            <person name="Docena C."/>
            <person name="El-Dorry H."/>
            <person name="Facincani A.P."/>
            <person name="Ferreira A.J.S."/>
            <person name="Ferreira V.C.A."/>
            <person name="Ferro J.A."/>
            <person name="Fraga J.S."/>
            <person name="Franca S.C."/>
            <person name="Franco M.C."/>
            <person name="Frohme M."/>
            <person name="Furlan L.R."/>
            <person name="Garnier M."/>
            <person name="Goldman G.H."/>
            <person name="Goldman M.H.S."/>
            <person name="Gomes S.L."/>
            <person name="Gruber A."/>
            <person name="Ho P.L."/>
            <person name="Hoheisel J.D."/>
            <person name="Junqueira M.L."/>
            <person name="Kemper E.L."/>
            <person name="Kitajima J.P."/>
            <person name="Krieger J.E."/>
            <person name="Kuramae E.E."/>
            <person name="Laigret F."/>
            <person name="Lambais M.R."/>
            <person name="Leite L.C.C."/>
            <person name="Lemos E.G.M."/>
            <person name="Lemos M.V.F."/>
            <person name="Lopes S.A."/>
            <person name="Lopes C.R."/>
            <person name="Machado J.A."/>
            <person name="Machado M.A."/>
            <person name="Madeira A.M.B.N."/>
            <person name="Madeira H.M.F."/>
            <person name="Marino C.L."/>
            <person name="Marques M.V."/>
            <person name="Martins E.A.L."/>
            <person name="Martins E.M.F."/>
            <person name="Matsukuma A.Y."/>
            <person name="Menck C.F.M."/>
            <person name="Miracca E.C."/>
            <person name="Miyaki C.Y."/>
            <person name="Monteiro-Vitorello C.B."/>
            <person name="Moon D.H."/>
            <person name="Nagai M.A."/>
            <person name="Nascimento A.L.T.O."/>
            <person name="Netto L.E.S."/>
            <person name="Nhani A. Jr."/>
            <person name="Nobrega F.G."/>
            <person name="Nunes L.R."/>
            <person name="Oliveira M.A."/>
            <person name="de Oliveira M.C."/>
            <person name="de Oliveira R.C."/>
            <person name="Palmieri D.A."/>
            <person name="Paris A."/>
            <person name="Peixoto B.R."/>
            <person name="Pereira G.A.G."/>
            <person name="Pereira H.A. Jr."/>
            <person name="Pesquero J.B."/>
            <person name="Quaggio R.B."/>
            <person name="Roberto P.G."/>
            <person name="Rodrigues V."/>
            <person name="de Rosa A.J.M."/>
            <person name="de Rosa V.E. Jr."/>
            <person name="de Sa R.G."/>
            <person name="Santelli R.V."/>
            <person name="Sawasaki H.E."/>
            <person name="da Silva A.C.R."/>
            <person name="da Silva A.M."/>
            <person name="da Silva F.R."/>
            <person name="Silva W.A. Jr."/>
            <person name="da Silveira J.F."/>
            <person name="Silvestri M.L.Z."/>
            <person name="Siqueira W.J."/>
            <person name="de Souza A.A."/>
            <person name="de Souza A.P."/>
            <person name="Terenzi M.F."/>
            <person name="Truffi D."/>
            <person name="Tsai S.M."/>
            <person name="Tsuhako M.H."/>
            <person name="Vallada H."/>
            <person name="Van Sluys M.A."/>
            <person name="Verjovski-Almeida S."/>
            <person name="Vettore A.L."/>
            <person name="Zago M.A."/>
            <person name="Zatz M."/>
            <person name="Meidanis J."/>
            <person name="Setubal J.C."/>
        </authorList>
    </citation>
    <scope>NUCLEOTIDE SEQUENCE [LARGE SCALE GENOMIC DNA]</scope>
    <source>
        <strain>9a5c</strain>
    </source>
</reference>
<name>DNAA_XYLFA</name>
<protein>
    <recommendedName>
        <fullName evidence="1">Chromosomal replication initiator protein DnaA</fullName>
    </recommendedName>
</protein>
<organism>
    <name type="scientific">Xylella fastidiosa (strain 9a5c)</name>
    <dbReference type="NCBI Taxonomy" id="160492"/>
    <lineage>
        <taxon>Bacteria</taxon>
        <taxon>Pseudomonadati</taxon>
        <taxon>Pseudomonadota</taxon>
        <taxon>Gammaproteobacteria</taxon>
        <taxon>Lysobacterales</taxon>
        <taxon>Lysobacteraceae</taxon>
        <taxon>Xylella</taxon>
    </lineage>
</organism>